<gene>
    <name evidence="8" type="primary">ABHD15</name>
    <name type="ORF">UNQ6510/PRO21435</name>
</gene>
<dbReference type="EMBL" id="AY358212">
    <property type="protein sequence ID" value="AAQ88579.1"/>
    <property type="molecule type" value="mRNA"/>
</dbReference>
<dbReference type="EMBL" id="AC104564">
    <property type="status" value="NOT_ANNOTATED_CDS"/>
    <property type="molecule type" value="Genomic_DNA"/>
</dbReference>
<dbReference type="EMBL" id="BC012476">
    <property type="protein sequence ID" value="AAH12476.2"/>
    <property type="molecule type" value="mRNA"/>
</dbReference>
<dbReference type="CCDS" id="CCDS32602.1"/>
<dbReference type="RefSeq" id="NP_937790.2">
    <property type="nucleotide sequence ID" value="NM_198147.3"/>
</dbReference>
<dbReference type="BioGRID" id="125492">
    <property type="interactions" value="37"/>
</dbReference>
<dbReference type="FunCoup" id="Q6UXT9">
    <property type="interactions" value="167"/>
</dbReference>
<dbReference type="IntAct" id="Q6UXT9">
    <property type="interactions" value="26"/>
</dbReference>
<dbReference type="STRING" id="9606.ENSP00000302657"/>
<dbReference type="ESTHER" id="human-ABHD15">
    <property type="family name" value="abh_upf0017"/>
</dbReference>
<dbReference type="iPTMnet" id="Q6UXT9"/>
<dbReference type="PhosphoSitePlus" id="Q6UXT9"/>
<dbReference type="SwissPalm" id="Q6UXT9"/>
<dbReference type="BioMuta" id="ABHD15"/>
<dbReference type="DMDM" id="308153403"/>
<dbReference type="jPOST" id="Q6UXT9"/>
<dbReference type="MassIVE" id="Q6UXT9"/>
<dbReference type="PaxDb" id="9606-ENSP00000302657"/>
<dbReference type="PeptideAtlas" id="Q6UXT9"/>
<dbReference type="ProteomicsDB" id="67657"/>
<dbReference type="Pumba" id="Q6UXT9"/>
<dbReference type="Antibodypedia" id="2595">
    <property type="antibodies" value="50 antibodies from 20 providers"/>
</dbReference>
<dbReference type="DNASU" id="116236"/>
<dbReference type="Ensembl" id="ENST00000307201.5">
    <property type="protein sequence ID" value="ENSP00000302657.3"/>
    <property type="gene ID" value="ENSG00000168792.5"/>
</dbReference>
<dbReference type="GeneID" id="116236"/>
<dbReference type="KEGG" id="hsa:116236"/>
<dbReference type="MANE-Select" id="ENST00000307201.5">
    <property type="protein sequence ID" value="ENSP00000302657.3"/>
    <property type="RefSeq nucleotide sequence ID" value="NM_198147.3"/>
    <property type="RefSeq protein sequence ID" value="NP_937790.2"/>
</dbReference>
<dbReference type="UCSC" id="uc002hed.3">
    <property type="organism name" value="human"/>
</dbReference>
<dbReference type="AGR" id="HGNC:26971"/>
<dbReference type="CTD" id="116236"/>
<dbReference type="DisGeNET" id="116236"/>
<dbReference type="GeneCards" id="ABHD15"/>
<dbReference type="HGNC" id="HGNC:26971">
    <property type="gene designation" value="ABHD15"/>
</dbReference>
<dbReference type="HPA" id="ENSG00000168792">
    <property type="expression patterns" value="Tissue enhanced (liver)"/>
</dbReference>
<dbReference type="MIM" id="619894">
    <property type="type" value="gene"/>
</dbReference>
<dbReference type="neXtProt" id="NX_Q6UXT9"/>
<dbReference type="OpenTargets" id="ENSG00000168792"/>
<dbReference type="PharmGKB" id="PA164714659"/>
<dbReference type="VEuPathDB" id="HostDB:ENSG00000168792"/>
<dbReference type="eggNOG" id="KOG1838">
    <property type="taxonomic scope" value="Eukaryota"/>
</dbReference>
<dbReference type="GeneTree" id="ENSGT00950000182902"/>
<dbReference type="HOGENOM" id="CLU_032487_3_0_1"/>
<dbReference type="InParanoid" id="Q6UXT9"/>
<dbReference type="OMA" id="AWSHEAT"/>
<dbReference type="OrthoDB" id="247542at2759"/>
<dbReference type="PAN-GO" id="Q6UXT9">
    <property type="GO annotations" value="3 GO annotations based on evolutionary models"/>
</dbReference>
<dbReference type="PhylomeDB" id="Q6UXT9"/>
<dbReference type="TreeFam" id="TF332985"/>
<dbReference type="PathwayCommons" id="Q6UXT9"/>
<dbReference type="SignaLink" id="Q6UXT9"/>
<dbReference type="BioGRID-ORCS" id="116236">
    <property type="hits" value="22 hits in 1155 CRISPR screens"/>
</dbReference>
<dbReference type="ChiTaRS" id="ABHD15">
    <property type="organism name" value="human"/>
</dbReference>
<dbReference type="GenomeRNAi" id="116236"/>
<dbReference type="Pharos" id="Q6UXT9">
    <property type="development level" value="Tdark"/>
</dbReference>
<dbReference type="PRO" id="PR:Q6UXT9"/>
<dbReference type="Proteomes" id="UP000005640">
    <property type="component" value="Chromosome 17"/>
</dbReference>
<dbReference type="RNAct" id="Q6UXT9">
    <property type="molecule type" value="protein"/>
</dbReference>
<dbReference type="Bgee" id="ENSG00000168792">
    <property type="expression patterns" value="Expressed in granulocyte and 122 other cell types or tissues"/>
</dbReference>
<dbReference type="GO" id="GO:0005576">
    <property type="term" value="C:extracellular region"/>
    <property type="evidence" value="ECO:0007669"/>
    <property type="project" value="UniProtKB-SubCell"/>
</dbReference>
<dbReference type="GO" id="GO:0016020">
    <property type="term" value="C:membrane"/>
    <property type="evidence" value="ECO:0007005"/>
    <property type="project" value="UniProtKB"/>
</dbReference>
<dbReference type="GO" id="GO:0047372">
    <property type="term" value="F:monoacylglycerol lipase activity"/>
    <property type="evidence" value="ECO:0000318"/>
    <property type="project" value="GO_Central"/>
</dbReference>
<dbReference type="GO" id="GO:0034338">
    <property type="term" value="F:short-chain carboxylesterase activity"/>
    <property type="evidence" value="ECO:0000318"/>
    <property type="project" value="GO_Central"/>
</dbReference>
<dbReference type="GO" id="GO:0060612">
    <property type="term" value="P:adipose tissue development"/>
    <property type="evidence" value="ECO:0000250"/>
    <property type="project" value="UniProtKB"/>
</dbReference>
<dbReference type="GO" id="GO:0016042">
    <property type="term" value="P:lipid catabolic process"/>
    <property type="evidence" value="ECO:0000250"/>
    <property type="project" value="UniProtKB"/>
</dbReference>
<dbReference type="GO" id="GO:0006629">
    <property type="term" value="P:lipid metabolic process"/>
    <property type="evidence" value="ECO:0000318"/>
    <property type="project" value="GO_Central"/>
</dbReference>
<dbReference type="FunFam" id="3.40.50.1820:FF:000103">
    <property type="entry name" value="Abhydrolase domain-containing 15"/>
    <property type="match status" value="1"/>
</dbReference>
<dbReference type="Gene3D" id="3.40.50.1820">
    <property type="entry name" value="alpha/beta hydrolase"/>
    <property type="match status" value="1"/>
</dbReference>
<dbReference type="InterPro" id="IPR050960">
    <property type="entry name" value="AB_hydrolase_4_sf"/>
</dbReference>
<dbReference type="InterPro" id="IPR029058">
    <property type="entry name" value="AB_hydrolase_fold"/>
</dbReference>
<dbReference type="PANTHER" id="PTHR10794">
    <property type="entry name" value="ABHYDROLASE DOMAIN-CONTAINING PROTEIN"/>
    <property type="match status" value="1"/>
</dbReference>
<dbReference type="PANTHER" id="PTHR10794:SF39">
    <property type="entry name" value="PROTEIN ABHD15"/>
    <property type="match status" value="1"/>
</dbReference>
<dbReference type="SUPFAM" id="SSF53474">
    <property type="entry name" value="alpha/beta-Hydrolases"/>
    <property type="match status" value="1"/>
</dbReference>
<sequence>MPPWGAALALILAVLALLGLLGPRLRGPWGRAVGERTLPGAQDRDDGEEADGGGPADQFSDGREPLPGGCSLVCKPSALAQCLLRALRRSEALEAGPRSWFSGPHLQTLCHFVLPVAPGPELAREYLQLADDGLVALDWVVGPCVRGRRITSAGGLPAVLLVIPNAWGRLTRNVLGLCLLALERGYYPVIFHRRGHHGCPLVSPRLQPFGDPSDLKEAVTYIRFRHPAAPLFAVSEGSGSALLLSYLGECGSSSYVTGAACISPVLRCREWFEAGLPWPYERGFLLHQKIALSRYATALEDTVDTSRLFRSRSLREFEEALFCHTKSFPISWDTYWDRNDPLRDVDEAAVPVLCICSADDPVCGPPDHTLTTELFHSNPYFFLLLSRHGGHCGFLRQEPLPAWSHEVILESFRALTEFFRTEERIKGLSRHRASFLGGRRRGGALQRREVSSSSNLEEIFNWKRSYTR</sequence>
<feature type="signal peptide" evidence="3">
    <location>
        <begin position="1"/>
        <end position="23"/>
    </location>
</feature>
<feature type="chain" id="PRO_0000345395" description="Protein ABHD15">
    <location>
        <begin position="24"/>
        <end position="468"/>
    </location>
</feature>
<feature type="region of interest" description="Disordered" evidence="4">
    <location>
        <begin position="33"/>
        <end position="61"/>
    </location>
</feature>
<feature type="active site" description="Charge relay system" evidence="1">
    <location>
        <position position="360"/>
    </location>
</feature>
<feature type="active site" description="Charge relay system" evidence="1">
    <location>
        <position position="391"/>
    </location>
</feature>
<feature type="modified residue" description="Phosphoserine" evidence="9">
    <location>
        <position position="434"/>
    </location>
</feature>
<feature type="sequence variant" id="VAR_045821" description="In dbSNP:rs542939." evidence="5 6">
    <original>T</original>
    <variation>A</variation>
    <location>
        <position position="334"/>
    </location>
</feature>
<feature type="sequence conflict" description="In Ref. 3; AAH12476." evidence="7" ref="3">
    <original>H</original>
    <variation>Y</variation>
    <location>
        <position position="287"/>
    </location>
</feature>
<organism>
    <name type="scientific">Homo sapiens</name>
    <name type="common">Human</name>
    <dbReference type="NCBI Taxonomy" id="9606"/>
    <lineage>
        <taxon>Eukaryota</taxon>
        <taxon>Metazoa</taxon>
        <taxon>Chordata</taxon>
        <taxon>Craniata</taxon>
        <taxon>Vertebrata</taxon>
        <taxon>Euteleostomi</taxon>
        <taxon>Mammalia</taxon>
        <taxon>Eutheria</taxon>
        <taxon>Euarchontoglires</taxon>
        <taxon>Primates</taxon>
        <taxon>Haplorrhini</taxon>
        <taxon>Catarrhini</taxon>
        <taxon>Hominidae</taxon>
        <taxon>Homo</taxon>
    </lineage>
</organism>
<accession>Q6UXT9</accession>
<accession>Q96EC5</accession>
<comment type="function">
    <text evidence="2">May regulate adipocyte lipolysis and liver lipid accumulation.</text>
</comment>
<comment type="subunit">
    <text evidence="2">Interacts with PDE3B; this interaction regulates PDE3B's stability and expression and, thereby, impacts the antilipolytic action of insulin.</text>
</comment>
<comment type="interaction">
    <interactant intactId="EBI-2824666">
        <id>Q6UXT9</id>
    </interactant>
    <interactant intactId="EBI-1047093">
        <id>O76011</id>
        <label>KRT34</label>
    </interactant>
    <organismsDiffer>false</organismsDiffer>
    <experiments>3</experiments>
</comment>
<comment type="interaction">
    <interactant intactId="EBI-2824666">
        <id>Q6UXT9</id>
    </interactant>
    <interactant intactId="EBI-11522433">
        <id>Q5JR59-3</id>
        <label>MTUS2</label>
    </interactant>
    <organismsDiffer>false</organismsDiffer>
    <experiments>3</experiments>
</comment>
<comment type="interaction">
    <interactant intactId="EBI-2824666">
        <id>Q6UXT9</id>
    </interactant>
    <interactant intactId="EBI-711613">
        <id>P21673</id>
        <label>SAT1</label>
    </interactant>
    <organismsDiffer>false</organismsDiffer>
    <experiments>3</experiments>
</comment>
<comment type="interaction">
    <interactant intactId="EBI-2824666">
        <id>Q6UXT9</id>
    </interactant>
    <interactant intactId="EBI-11957238">
        <id>Q2TAL6</id>
        <label>VWC2</label>
    </interactant>
    <organismsDiffer>false</organismsDiffer>
    <experiments>3</experiments>
</comment>
<comment type="interaction">
    <interactant intactId="EBI-2824666">
        <id>Q6UXT9</id>
    </interactant>
    <interactant intactId="EBI-751647">
        <id>Q15007</id>
        <label>WTAP</label>
    </interactant>
    <organismsDiffer>false</organismsDiffer>
    <experiments>3</experiments>
</comment>
<comment type="subcellular location">
    <subcellularLocation>
        <location evidence="7">Secreted</location>
    </subcellularLocation>
</comment>
<comment type="similarity">
    <text evidence="7">Belongs to the AB hydrolase superfamily. AB hydrolase 4 family.</text>
</comment>
<protein>
    <recommendedName>
        <fullName evidence="7">Protein ABHD15</fullName>
    </recommendedName>
    <alternativeName>
        <fullName evidence="7">Alpha/beta hydrolase domain-containing protein 15</fullName>
        <shortName evidence="8">Abhydrolase domain-containing protein 15</shortName>
    </alternativeName>
</protein>
<name>ABH15_HUMAN</name>
<keyword id="KW-0597">Phosphoprotein</keyword>
<keyword id="KW-1267">Proteomics identification</keyword>
<keyword id="KW-1185">Reference proteome</keyword>
<keyword id="KW-0964">Secreted</keyword>
<keyword id="KW-0732">Signal</keyword>
<proteinExistence type="evidence at protein level"/>
<reference key="1">
    <citation type="journal article" date="2003" name="Genome Res.">
        <title>The secreted protein discovery initiative (SPDI), a large-scale effort to identify novel human secreted and transmembrane proteins: a bioinformatics assessment.</title>
        <authorList>
            <person name="Clark H.F."/>
            <person name="Gurney A.L."/>
            <person name="Abaya E."/>
            <person name="Baker K."/>
            <person name="Baldwin D.T."/>
            <person name="Brush J."/>
            <person name="Chen J."/>
            <person name="Chow B."/>
            <person name="Chui C."/>
            <person name="Crowley C."/>
            <person name="Currell B."/>
            <person name="Deuel B."/>
            <person name="Dowd P."/>
            <person name="Eaton D."/>
            <person name="Foster J.S."/>
            <person name="Grimaldi C."/>
            <person name="Gu Q."/>
            <person name="Hass P.E."/>
            <person name="Heldens S."/>
            <person name="Huang A."/>
            <person name="Kim H.S."/>
            <person name="Klimowski L."/>
            <person name="Jin Y."/>
            <person name="Johnson S."/>
            <person name="Lee J."/>
            <person name="Lewis L."/>
            <person name="Liao D."/>
            <person name="Mark M.R."/>
            <person name="Robbie E."/>
            <person name="Sanchez C."/>
            <person name="Schoenfeld J."/>
            <person name="Seshagiri S."/>
            <person name="Simmons L."/>
            <person name="Singh J."/>
            <person name="Smith V."/>
            <person name="Stinson J."/>
            <person name="Vagts A."/>
            <person name="Vandlen R.L."/>
            <person name="Watanabe C."/>
            <person name="Wieand D."/>
            <person name="Woods K."/>
            <person name="Xie M.-H."/>
            <person name="Yansura D.G."/>
            <person name="Yi S."/>
            <person name="Yu G."/>
            <person name="Yuan J."/>
            <person name="Zhang M."/>
            <person name="Zhang Z."/>
            <person name="Goddard A.D."/>
            <person name="Wood W.I."/>
            <person name="Godowski P.J."/>
            <person name="Gray A.M."/>
        </authorList>
    </citation>
    <scope>NUCLEOTIDE SEQUENCE [LARGE SCALE MRNA]</scope>
    <scope>VARIANT ALA-334</scope>
</reference>
<reference key="2">
    <citation type="journal article" date="2006" name="Nature">
        <title>DNA sequence of human chromosome 17 and analysis of rearrangement in the human lineage.</title>
        <authorList>
            <person name="Zody M.C."/>
            <person name="Garber M."/>
            <person name="Adams D.J."/>
            <person name="Sharpe T."/>
            <person name="Harrow J."/>
            <person name="Lupski J.R."/>
            <person name="Nicholson C."/>
            <person name="Searle S.M."/>
            <person name="Wilming L."/>
            <person name="Young S.K."/>
            <person name="Abouelleil A."/>
            <person name="Allen N.R."/>
            <person name="Bi W."/>
            <person name="Bloom T."/>
            <person name="Borowsky M.L."/>
            <person name="Bugalter B.E."/>
            <person name="Butler J."/>
            <person name="Chang J.L."/>
            <person name="Chen C.-K."/>
            <person name="Cook A."/>
            <person name="Corum B."/>
            <person name="Cuomo C.A."/>
            <person name="de Jong P.J."/>
            <person name="DeCaprio D."/>
            <person name="Dewar K."/>
            <person name="FitzGerald M."/>
            <person name="Gilbert J."/>
            <person name="Gibson R."/>
            <person name="Gnerre S."/>
            <person name="Goldstein S."/>
            <person name="Grafham D.V."/>
            <person name="Grocock R."/>
            <person name="Hafez N."/>
            <person name="Hagopian D.S."/>
            <person name="Hart E."/>
            <person name="Norman C.H."/>
            <person name="Humphray S."/>
            <person name="Jaffe D.B."/>
            <person name="Jones M."/>
            <person name="Kamal M."/>
            <person name="Khodiyar V.K."/>
            <person name="LaButti K."/>
            <person name="Laird G."/>
            <person name="Lehoczky J."/>
            <person name="Liu X."/>
            <person name="Lokyitsang T."/>
            <person name="Loveland J."/>
            <person name="Lui A."/>
            <person name="Macdonald P."/>
            <person name="Major J.E."/>
            <person name="Matthews L."/>
            <person name="Mauceli E."/>
            <person name="McCarroll S.A."/>
            <person name="Mihalev A.H."/>
            <person name="Mudge J."/>
            <person name="Nguyen C."/>
            <person name="Nicol R."/>
            <person name="O'Leary S.B."/>
            <person name="Osoegawa K."/>
            <person name="Schwartz D.C."/>
            <person name="Shaw-Smith C."/>
            <person name="Stankiewicz P."/>
            <person name="Steward C."/>
            <person name="Swarbreck D."/>
            <person name="Venkataraman V."/>
            <person name="Whittaker C.A."/>
            <person name="Yang X."/>
            <person name="Zimmer A.R."/>
            <person name="Bradley A."/>
            <person name="Hubbard T."/>
            <person name="Birren B.W."/>
            <person name="Rogers J."/>
            <person name="Lander E.S."/>
            <person name="Nusbaum C."/>
        </authorList>
    </citation>
    <scope>NUCLEOTIDE SEQUENCE [LARGE SCALE GENOMIC DNA]</scope>
</reference>
<reference key="3">
    <citation type="journal article" date="2004" name="Genome Res.">
        <title>The status, quality, and expansion of the NIH full-length cDNA project: the Mammalian Gene Collection (MGC).</title>
        <authorList>
            <consortium name="The MGC Project Team"/>
        </authorList>
    </citation>
    <scope>NUCLEOTIDE SEQUENCE [LARGE SCALE MRNA]</scope>
    <scope>VARIANT ALA-334</scope>
    <source>
        <tissue>Testis</tissue>
    </source>
</reference>
<reference key="4">
    <citation type="journal article" date="2013" name="J. Proteome Res.">
        <title>Toward a comprehensive characterization of a human cancer cell phosphoproteome.</title>
        <authorList>
            <person name="Zhou H."/>
            <person name="Di Palma S."/>
            <person name="Preisinger C."/>
            <person name="Peng M."/>
            <person name="Polat A.N."/>
            <person name="Heck A.J."/>
            <person name="Mohammed S."/>
        </authorList>
    </citation>
    <scope>PHOSPHORYLATION [LARGE SCALE ANALYSIS] AT SER-434</scope>
    <scope>IDENTIFICATION BY MASS SPECTROMETRY [LARGE SCALE ANALYSIS]</scope>
    <source>
        <tissue>Cervix carcinoma</tissue>
    </source>
</reference>
<evidence type="ECO:0000250" key="1"/>
<evidence type="ECO:0000250" key="2">
    <source>
        <dbReference type="UniProtKB" id="Q5F2F2"/>
    </source>
</evidence>
<evidence type="ECO:0000255" key="3"/>
<evidence type="ECO:0000256" key="4">
    <source>
        <dbReference type="SAM" id="MobiDB-lite"/>
    </source>
</evidence>
<evidence type="ECO:0000269" key="5">
    <source>
    </source>
</evidence>
<evidence type="ECO:0000269" key="6">
    <source>
    </source>
</evidence>
<evidence type="ECO:0000305" key="7"/>
<evidence type="ECO:0000312" key="8">
    <source>
        <dbReference type="HGNC" id="HGNC:26971"/>
    </source>
</evidence>
<evidence type="ECO:0007744" key="9">
    <source>
    </source>
</evidence>